<protein>
    <recommendedName>
        <fullName evidence="2">Translation initiation factor IF-2</fullName>
    </recommendedName>
</protein>
<accession>A9HF18</accession>
<accession>B5ZDK0</accession>
<organism>
    <name type="scientific">Gluconacetobacter diazotrophicus (strain ATCC 49037 / DSM 5601 / CCUG 37298 / CIP 103539 / LMG 7603 / PAl5)</name>
    <dbReference type="NCBI Taxonomy" id="272568"/>
    <lineage>
        <taxon>Bacteria</taxon>
        <taxon>Pseudomonadati</taxon>
        <taxon>Pseudomonadota</taxon>
        <taxon>Alphaproteobacteria</taxon>
        <taxon>Acetobacterales</taxon>
        <taxon>Acetobacteraceae</taxon>
        <taxon>Gluconacetobacter</taxon>
    </lineage>
</organism>
<keyword id="KW-0963">Cytoplasm</keyword>
<keyword id="KW-0342">GTP-binding</keyword>
<keyword id="KW-0396">Initiation factor</keyword>
<keyword id="KW-0547">Nucleotide-binding</keyword>
<keyword id="KW-0648">Protein biosynthesis</keyword>
<keyword id="KW-1185">Reference proteome</keyword>
<comment type="function">
    <text evidence="2">One of the essential components for the initiation of protein synthesis. Protects formylmethionyl-tRNA from spontaneous hydrolysis and promotes its binding to the 30S ribosomal subunits. Also involved in the hydrolysis of GTP during the formation of the 70S ribosomal complex.</text>
</comment>
<comment type="subcellular location">
    <subcellularLocation>
        <location evidence="2">Cytoplasm</location>
    </subcellularLocation>
</comment>
<comment type="similarity">
    <text evidence="2">Belongs to the TRAFAC class translation factor GTPase superfamily. Classic translation factor GTPase family. IF-2 subfamily.</text>
</comment>
<dbReference type="EMBL" id="AM889285">
    <property type="protein sequence ID" value="CAP55308.1"/>
    <property type="molecule type" value="Genomic_DNA"/>
</dbReference>
<dbReference type="EMBL" id="CP001189">
    <property type="protein sequence ID" value="ACI51830.1"/>
    <property type="molecule type" value="Genomic_DNA"/>
</dbReference>
<dbReference type="RefSeq" id="WP_012224611.1">
    <property type="nucleotide sequence ID" value="NC_010125.1"/>
</dbReference>
<dbReference type="SMR" id="A9HF18"/>
<dbReference type="STRING" id="272568.GDI1365"/>
<dbReference type="KEGG" id="gdi:GDI1365"/>
<dbReference type="KEGG" id="gdj:Gdia_2070"/>
<dbReference type="eggNOG" id="COG0532">
    <property type="taxonomic scope" value="Bacteria"/>
</dbReference>
<dbReference type="eggNOG" id="COG5373">
    <property type="taxonomic scope" value="Bacteria"/>
</dbReference>
<dbReference type="HOGENOM" id="CLU_006301_10_1_5"/>
<dbReference type="OrthoDB" id="9811804at2"/>
<dbReference type="Proteomes" id="UP000001176">
    <property type="component" value="Chromosome"/>
</dbReference>
<dbReference type="GO" id="GO:0005829">
    <property type="term" value="C:cytosol"/>
    <property type="evidence" value="ECO:0007669"/>
    <property type="project" value="TreeGrafter"/>
</dbReference>
<dbReference type="GO" id="GO:0005525">
    <property type="term" value="F:GTP binding"/>
    <property type="evidence" value="ECO:0007669"/>
    <property type="project" value="UniProtKB-KW"/>
</dbReference>
<dbReference type="GO" id="GO:0003924">
    <property type="term" value="F:GTPase activity"/>
    <property type="evidence" value="ECO:0007669"/>
    <property type="project" value="UniProtKB-UniRule"/>
</dbReference>
<dbReference type="GO" id="GO:0097216">
    <property type="term" value="F:guanosine tetraphosphate binding"/>
    <property type="evidence" value="ECO:0007669"/>
    <property type="project" value="UniProtKB-ARBA"/>
</dbReference>
<dbReference type="GO" id="GO:0003743">
    <property type="term" value="F:translation initiation factor activity"/>
    <property type="evidence" value="ECO:0007669"/>
    <property type="project" value="UniProtKB-UniRule"/>
</dbReference>
<dbReference type="CDD" id="cd01887">
    <property type="entry name" value="IF2_eIF5B"/>
    <property type="match status" value="1"/>
</dbReference>
<dbReference type="CDD" id="cd03702">
    <property type="entry name" value="IF2_mtIF2_II"/>
    <property type="match status" value="1"/>
</dbReference>
<dbReference type="CDD" id="cd03692">
    <property type="entry name" value="mtIF2_IVc"/>
    <property type="match status" value="1"/>
</dbReference>
<dbReference type="FunFam" id="2.40.30.10:FF:000007">
    <property type="entry name" value="Translation initiation factor IF-2"/>
    <property type="match status" value="1"/>
</dbReference>
<dbReference type="FunFam" id="2.40.30.10:FF:000008">
    <property type="entry name" value="Translation initiation factor IF-2"/>
    <property type="match status" value="1"/>
</dbReference>
<dbReference type="FunFam" id="3.40.50.10050:FF:000001">
    <property type="entry name" value="Translation initiation factor IF-2"/>
    <property type="match status" value="1"/>
</dbReference>
<dbReference type="FunFam" id="3.40.50.300:FF:000019">
    <property type="entry name" value="Translation initiation factor IF-2"/>
    <property type="match status" value="1"/>
</dbReference>
<dbReference type="Gene3D" id="3.40.50.300">
    <property type="entry name" value="P-loop containing nucleotide triphosphate hydrolases"/>
    <property type="match status" value="1"/>
</dbReference>
<dbReference type="Gene3D" id="2.40.30.10">
    <property type="entry name" value="Translation factors"/>
    <property type="match status" value="2"/>
</dbReference>
<dbReference type="Gene3D" id="3.40.50.10050">
    <property type="entry name" value="Translation initiation factor IF- 2, domain 3"/>
    <property type="match status" value="1"/>
</dbReference>
<dbReference type="HAMAP" id="MF_00100_B">
    <property type="entry name" value="IF_2_B"/>
    <property type="match status" value="1"/>
</dbReference>
<dbReference type="InterPro" id="IPR053905">
    <property type="entry name" value="EF-G-like_DII"/>
</dbReference>
<dbReference type="InterPro" id="IPR004161">
    <property type="entry name" value="EFTu-like_2"/>
</dbReference>
<dbReference type="InterPro" id="IPR013575">
    <property type="entry name" value="IF2_assoc_dom_bac"/>
</dbReference>
<dbReference type="InterPro" id="IPR044145">
    <property type="entry name" value="IF2_II"/>
</dbReference>
<dbReference type="InterPro" id="IPR006847">
    <property type="entry name" value="IF2_N"/>
</dbReference>
<dbReference type="InterPro" id="IPR027417">
    <property type="entry name" value="P-loop_NTPase"/>
</dbReference>
<dbReference type="InterPro" id="IPR005225">
    <property type="entry name" value="Small_GTP-bd"/>
</dbReference>
<dbReference type="InterPro" id="IPR000795">
    <property type="entry name" value="T_Tr_GTP-bd_dom"/>
</dbReference>
<dbReference type="InterPro" id="IPR000178">
    <property type="entry name" value="TF_IF2_bacterial-like"/>
</dbReference>
<dbReference type="InterPro" id="IPR015760">
    <property type="entry name" value="TIF_IF2"/>
</dbReference>
<dbReference type="InterPro" id="IPR023115">
    <property type="entry name" value="TIF_IF2_dom3"/>
</dbReference>
<dbReference type="InterPro" id="IPR036925">
    <property type="entry name" value="TIF_IF2_dom3_sf"/>
</dbReference>
<dbReference type="InterPro" id="IPR009000">
    <property type="entry name" value="Transl_B-barrel_sf"/>
</dbReference>
<dbReference type="NCBIfam" id="TIGR00487">
    <property type="entry name" value="IF-2"/>
    <property type="match status" value="1"/>
</dbReference>
<dbReference type="NCBIfam" id="TIGR00231">
    <property type="entry name" value="small_GTP"/>
    <property type="match status" value="1"/>
</dbReference>
<dbReference type="PANTHER" id="PTHR43381:SF5">
    <property type="entry name" value="TR-TYPE G DOMAIN-CONTAINING PROTEIN"/>
    <property type="match status" value="1"/>
</dbReference>
<dbReference type="PANTHER" id="PTHR43381">
    <property type="entry name" value="TRANSLATION INITIATION FACTOR IF-2-RELATED"/>
    <property type="match status" value="1"/>
</dbReference>
<dbReference type="Pfam" id="PF22042">
    <property type="entry name" value="EF-G_D2"/>
    <property type="match status" value="1"/>
</dbReference>
<dbReference type="Pfam" id="PF00009">
    <property type="entry name" value="GTP_EFTU"/>
    <property type="match status" value="1"/>
</dbReference>
<dbReference type="Pfam" id="PF03144">
    <property type="entry name" value="GTP_EFTU_D2"/>
    <property type="match status" value="1"/>
</dbReference>
<dbReference type="Pfam" id="PF11987">
    <property type="entry name" value="IF-2"/>
    <property type="match status" value="1"/>
</dbReference>
<dbReference type="Pfam" id="PF08364">
    <property type="entry name" value="IF2_assoc"/>
    <property type="match status" value="1"/>
</dbReference>
<dbReference type="Pfam" id="PF04760">
    <property type="entry name" value="IF2_N"/>
    <property type="match status" value="1"/>
</dbReference>
<dbReference type="SUPFAM" id="SSF52156">
    <property type="entry name" value="Initiation factor IF2/eIF5b, domain 3"/>
    <property type="match status" value="1"/>
</dbReference>
<dbReference type="SUPFAM" id="SSF52540">
    <property type="entry name" value="P-loop containing nucleoside triphosphate hydrolases"/>
    <property type="match status" value="1"/>
</dbReference>
<dbReference type="SUPFAM" id="SSF50447">
    <property type="entry name" value="Translation proteins"/>
    <property type="match status" value="2"/>
</dbReference>
<dbReference type="PROSITE" id="PS51722">
    <property type="entry name" value="G_TR_2"/>
    <property type="match status" value="1"/>
</dbReference>
<dbReference type="PROSITE" id="PS01176">
    <property type="entry name" value="IF2"/>
    <property type="match status" value="1"/>
</dbReference>
<feature type="chain" id="PRO_1000075607" description="Translation initiation factor IF-2">
    <location>
        <begin position="1"/>
        <end position="907"/>
    </location>
</feature>
<feature type="domain" description="tr-type G">
    <location>
        <begin position="406"/>
        <end position="576"/>
    </location>
</feature>
<feature type="region of interest" description="Disordered" evidence="3">
    <location>
        <begin position="1"/>
        <end position="305"/>
    </location>
</feature>
<feature type="region of interest" description="G1" evidence="1">
    <location>
        <begin position="415"/>
        <end position="422"/>
    </location>
</feature>
<feature type="region of interest" description="G2" evidence="1">
    <location>
        <begin position="440"/>
        <end position="444"/>
    </location>
</feature>
<feature type="region of interest" description="G3" evidence="1">
    <location>
        <begin position="462"/>
        <end position="465"/>
    </location>
</feature>
<feature type="region of interest" description="G4" evidence="1">
    <location>
        <begin position="516"/>
        <end position="519"/>
    </location>
</feature>
<feature type="region of interest" description="G5" evidence="1">
    <location>
        <begin position="552"/>
        <end position="554"/>
    </location>
</feature>
<feature type="compositionally biased region" description="Gly residues" evidence="3">
    <location>
        <begin position="62"/>
        <end position="80"/>
    </location>
</feature>
<feature type="compositionally biased region" description="Basic and acidic residues" evidence="3">
    <location>
        <begin position="93"/>
        <end position="114"/>
    </location>
</feature>
<feature type="compositionally biased region" description="Basic and acidic residues" evidence="3">
    <location>
        <begin position="122"/>
        <end position="158"/>
    </location>
</feature>
<feature type="compositionally biased region" description="Low complexity" evidence="3">
    <location>
        <begin position="211"/>
        <end position="230"/>
    </location>
</feature>
<feature type="compositionally biased region" description="Basic and acidic residues" evidence="3">
    <location>
        <begin position="240"/>
        <end position="249"/>
    </location>
</feature>
<feature type="compositionally biased region" description="Basic and acidic residues" evidence="3">
    <location>
        <begin position="271"/>
        <end position="280"/>
    </location>
</feature>
<feature type="binding site" evidence="2">
    <location>
        <begin position="415"/>
        <end position="422"/>
    </location>
    <ligand>
        <name>GTP</name>
        <dbReference type="ChEBI" id="CHEBI:37565"/>
    </ligand>
</feature>
<feature type="binding site" evidence="2">
    <location>
        <begin position="462"/>
        <end position="466"/>
    </location>
    <ligand>
        <name>GTP</name>
        <dbReference type="ChEBI" id="CHEBI:37565"/>
    </ligand>
</feature>
<feature type="binding site" evidence="2">
    <location>
        <begin position="516"/>
        <end position="519"/>
    </location>
    <ligand>
        <name>GTP</name>
        <dbReference type="ChEBI" id="CHEBI:37565"/>
    </ligand>
</feature>
<reference key="1">
    <citation type="journal article" date="2009" name="BMC Genomics">
        <title>Complete genome sequence of the sugarcane nitrogen-fixing endophyte Gluconacetobacter diazotrophicus Pal5.</title>
        <authorList>
            <person name="Bertalan M."/>
            <person name="Albano R."/>
            <person name="de Padua V."/>
            <person name="Rouws L."/>
            <person name="Rojas C."/>
            <person name="Hemerly A."/>
            <person name="Teixeira K."/>
            <person name="Schwab S."/>
            <person name="Araujo J."/>
            <person name="Oliveira A."/>
            <person name="Franca L."/>
            <person name="Magalhaes V."/>
            <person name="Alqueres S."/>
            <person name="Cardoso A."/>
            <person name="Almeida W."/>
            <person name="Loureiro M.M."/>
            <person name="Nogueira E."/>
            <person name="Cidade D."/>
            <person name="Oliveira D."/>
            <person name="Simao T."/>
            <person name="Macedo J."/>
            <person name="Valadao A."/>
            <person name="Dreschsel M."/>
            <person name="Freitas F."/>
            <person name="Vidal M."/>
            <person name="Guedes H."/>
            <person name="Rodrigues E."/>
            <person name="Meneses C."/>
            <person name="Brioso P."/>
            <person name="Pozzer L."/>
            <person name="Figueiredo D."/>
            <person name="Montano H."/>
            <person name="Junior J."/>
            <person name="de Souza Filho G."/>
            <person name="Martin Quintana Flores V."/>
            <person name="Ferreira B."/>
            <person name="Branco A."/>
            <person name="Gonzalez P."/>
            <person name="Guillobel H."/>
            <person name="Lemos M."/>
            <person name="Seibel L."/>
            <person name="Macedo J."/>
            <person name="Alves-Ferreira M."/>
            <person name="Sachetto-Martins G."/>
            <person name="Coelho A."/>
            <person name="Santos E."/>
            <person name="Amaral G."/>
            <person name="Neves A."/>
            <person name="Pacheco A.B."/>
            <person name="Carvalho D."/>
            <person name="Lery L."/>
            <person name="Bisch P."/>
            <person name="Rossle S.C."/>
            <person name="Urmenyi T."/>
            <person name="Rael Pereira A."/>
            <person name="Silva R."/>
            <person name="Rondinelli E."/>
            <person name="von Kruger W."/>
            <person name="Martins O."/>
            <person name="Baldani J.I."/>
            <person name="Ferreira P.C."/>
        </authorList>
    </citation>
    <scope>NUCLEOTIDE SEQUENCE [LARGE SCALE GENOMIC DNA]</scope>
    <source>
        <strain>ATCC 49037 / DSM 5601 / CCUG 37298 / CIP 103539 / LMG 7603 / PAl5</strain>
    </source>
</reference>
<reference key="2">
    <citation type="journal article" date="2010" name="Stand. Genomic Sci.">
        <title>Two genome sequences of the same bacterial strain, Gluconacetobacter diazotrophicus PAl 5, suggest a new standard in genome sequence submission.</title>
        <authorList>
            <person name="Giongo A."/>
            <person name="Tyler H.L."/>
            <person name="Zipperer U.N."/>
            <person name="Triplett E.W."/>
        </authorList>
    </citation>
    <scope>NUCLEOTIDE SEQUENCE [LARGE SCALE GENOMIC DNA]</scope>
    <source>
        <strain>ATCC 49037 / DSM 5601 / CCUG 37298 / CIP 103539 / LMG 7603 / PAl5</strain>
    </source>
</reference>
<name>IF2_GLUDA</name>
<gene>
    <name evidence="2" type="primary">infB</name>
    <name type="ordered locus">GDI1365</name>
    <name type="ordered locus">Gdia_2070</name>
</gene>
<proteinExistence type="inferred from homology"/>
<evidence type="ECO:0000250" key="1"/>
<evidence type="ECO:0000255" key="2">
    <source>
        <dbReference type="HAMAP-Rule" id="MF_00100"/>
    </source>
</evidence>
<evidence type="ECO:0000256" key="3">
    <source>
        <dbReference type="SAM" id="MobiDB-lite"/>
    </source>
</evidence>
<sequence length="907" mass="97865">MSEGNDQDQGKGRLSLRPAGRKDVGRTVDAGSVRQSFSHGRSKVVQVEVRKKRGPGPAPAGSGSGSSGGGRAGGRGGSGGRALTASELATRQRVLEEQRAEAVRREQERREQEKIMILSAAEEARRRDEEARRAAEDEVREKEEAAARAREEEAERRASAQAHGQAGTPSRAEPEPESSGPVVSAVPIPGAVTLAPPMERLRPLAERAIMPARPVTPSRPATPAATPQAPGETLRLRTGRVGEAEDDRRPARRPGGGIAPGRKPSGASPKKGGDSRRSGRIDVQAAIEGDDDKTRSLASVRRQRERERRQAELERLRADQVRVVRDVILPETITVQELANRMAARQGEVIKALMKMGVMATVTQSLDADTAELVVQEFGHRVRRVADSDVEIGIEGIEDQPEDLLPRPPVVTVMGHVDHGKTSLLDALRTTDVAAAEAGGITQHIGAYQVTLPSGSKITFIDTPGHEAFTAMRARGASVTDVVVLVVAADDGVMPQTIEAIRHAKAANAPIIVAINKCDKPGANPERVRQELLSHEIVVESMGGDTQDVEVSALKRTGLDKLEEAILLQAEMLDLRANPDRVAEGSVIESRLDRGRGPVATVLVQKGTLRRGDIVVAGAEWGRVRAMLDDRGRQIQEAAPAMPVEILGIAGVPGAGEPFVVVDNENRAREISEFRQRVIRDRTAAGQTAARGTLDQMLARIQAGAQKEVAVLIKADVQGSAEALQATVLKLEHEEVKVRVLTAGVGQITESDVQLAKASDAVIIAFNVRATTQARELAQREGVDIRYYSIIYQVADDVEQLVKGKVAPKHREKFLGYAEIRKVFDITKVGKVAGCYVTEGVVKRGCGVRLLRDNVVVHEGELSQLKRFKDDVKEVARGYECGLSFAGYNDLREGDMVECYEMELVPA</sequence>